<feature type="chain" id="PRO_0000140617" description="Chorismate synthase">
    <location>
        <begin position="1"/>
        <end position="366"/>
    </location>
</feature>
<feature type="binding site" evidence="1">
    <location>
        <position position="48"/>
    </location>
    <ligand>
        <name>NADP(+)</name>
        <dbReference type="ChEBI" id="CHEBI:58349"/>
    </ligand>
</feature>
<feature type="binding site" evidence="1">
    <location>
        <position position="54"/>
    </location>
    <ligand>
        <name>NADP(+)</name>
        <dbReference type="ChEBI" id="CHEBI:58349"/>
    </ligand>
</feature>
<feature type="binding site" evidence="1">
    <location>
        <begin position="125"/>
        <end position="127"/>
    </location>
    <ligand>
        <name>FMN</name>
        <dbReference type="ChEBI" id="CHEBI:58210"/>
    </ligand>
</feature>
<feature type="binding site" evidence="1">
    <location>
        <begin position="238"/>
        <end position="239"/>
    </location>
    <ligand>
        <name>FMN</name>
        <dbReference type="ChEBI" id="CHEBI:58210"/>
    </ligand>
</feature>
<feature type="binding site" evidence="1">
    <location>
        <position position="278"/>
    </location>
    <ligand>
        <name>FMN</name>
        <dbReference type="ChEBI" id="CHEBI:58210"/>
    </ligand>
</feature>
<feature type="binding site" evidence="1">
    <location>
        <begin position="293"/>
        <end position="297"/>
    </location>
    <ligand>
        <name>FMN</name>
        <dbReference type="ChEBI" id="CHEBI:58210"/>
    </ligand>
</feature>
<feature type="binding site" evidence="1">
    <location>
        <position position="319"/>
    </location>
    <ligand>
        <name>FMN</name>
        <dbReference type="ChEBI" id="CHEBI:58210"/>
    </ligand>
</feature>
<reference key="1">
    <citation type="journal article" date="2000" name="Nature">
        <title>Complete DNA sequence of a serogroup A strain of Neisseria meningitidis Z2491.</title>
        <authorList>
            <person name="Parkhill J."/>
            <person name="Achtman M."/>
            <person name="James K.D."/>
            <person name="Bentley S.D."/>
            <person name="Churcher C.M."/>
            <person name="Klee S.R."/>
            <person name="Morelli G."/>
            <person name="Basham D."/>
            <person name="Brown D."/>
            <person name="Chillingworth T."/>
            <person name="Davies R.M."/>
            <person name="Davis P."/>
            <person name="Devlin K."/>
            <person name="Feltwell T."/>
            <person name="Hamlin N."/>
            <person name="Holroyd S."/>
            <person name="Jagels K."/>
            <person name="Leather S."/>
            <person name="Moule S."/>
            <person name="Mungall K.L."/>
            <person name="Quail M.A."/>
            <person name="Rajandream M.A."/>
            <person name="Rutherford K.M."/>
            <person name="Simmonds M."/>
            <person name="Skelton J."/>
            <person name="Whitehead S."/>
            <person name="Spratt B.G."/>
            <person name="Barrell B.G."/>
        </authorList>
    </citation>
    <scope>NUCLEOTIDE SEQUENCE [LARGE SCALE GENOMIC DNA]</scope>
    <source>
        <strain>DSM 15465 / Z2491</strain>
    </source>
</reference>
<comment type="function">
    <text evidence="1">Catalyzes the anti-1,4-elimination of the C-3 phosphate and the C-6 proR hydrogen from 5-enolpyruvylshikimate-3-phosphate (EPSP) to yield chorismate, which is the branch point compound that serves as the starting substrate for the three terminal pathways of aromatic amino acid biosynthesis. This reaction introduces a second double bond into the aromatic ring system.</text>
</comment>
<comment type="catalytic activity">
    <reaction evidence="1">
        <text>5-O-(1-carboxyvinyl)-3-phosphoshikimate = chorismate + phosphate</text>
        <dbReference type="Rhea" id="RHEA:21020"/>
        <dbReference type="ChEBI" id="CHEBI:29748"/>
        <dbReference type="ChEBI" id="CHEBI:43474"/>
        <dbReference type="ChEBI" id="CHEBI:57701"/>
        <dbReference type="EC" id="4.2.3.5"/>
    </reaction>
</comment>
<comment type="cofactor">
    <cofactor evidence="1">
        <name>FMNH2</name>
        <dbReference type="ChEBI" id="CHEBI:57618"/>
    </cofactor>
    <text evidence="1">Reduced FMN (FMNH(2)).</text>
</comment>
<comment type="pathway">
    <text evidence="1">Metabolic intermediate biosynthesis; chorismate biosynthesis; chorismate from D-erythrose 4-phosphate and phosphoenolpyruvate: step 7/7.</text>
</comment>
<comment type="subunit">
    <text evidence="1">Homotetramer.</text>
</comment>
<comment type="similarity">
    <text evidence="1">Belongs to the chorismate synthase family.</text>
</comment>
<accession>Q9JT81</accession>
<accession>A1ITD7</accession>
<organism>
    <name type="scientific">Neisseria meningitidis serogroup A / serotype 4A (strain DSM 15465 / Z2491)</name>
    <dbReference type="NCBI Taxonomy" id="122587"/>
    <lineage>
        <taxon>Bacteria</taxon>
        <taxon>Pseudomonadati</taxon>
        <taxon>Pseudomonadota</taxon>
        <taxon>Betaproteobacteria</taxon>
        <taxon>Neisseriales</taxon>
        <taxon>Neisseriaceae</taxon>
        <taxon>Neisseria</taxon>
    </lineage>
</organism>
<evidence type="ECO:0000255" key="1">
    <source>
        <dbReference type="HAMAP-Rule" id="MF_00300"/>
    </source>
</evidence>
<protein>
    <recommendedName>
        <fullName evidence="1">Chorismate synthase</fullName>
        <shortName evidence="1">CS</shortName>
        <ecNumber evidence="1">4.2.3.5</ecNumber>
    </recommendedName>
    <alternativeName>
        <fullName evidence="1">5-enolpyruvylshikimate-3-phosphate phospholyase</fullName>
    </alternativeName>
</protein>
<dbReference type="EC" id="4.2.3.5" evidence="1"/>
<dbReference type="EMBL" id="AL157959">
    <property type="protein sequence ID" value="CAM09051.1"/>
    <property type="molecule type" value="Genomic_DNA"/>
</dbReference>
<dbReference type="PIR" id="A81822">
    <property type="entry name" value="A81822"/>
</dbReference>
<dbReference type="RefSeq" id="WP_002212642.1">
    <property type="nucleotide sequence ID" value="NC_003116.1"/>
</dbReference>
<dbReference type="SMR" id="Q9JT81"/>
<dbReference type="EnsemblBacteria" id="CAM09051">
    <property type="protein sequence ID" value="CAM09051"/>
    <property type="gene ID" value="NMA1939"/>
</dbReference>
<dbReference type="GeneID" id="93387645"/>
<dbReference type="KEGG" id="nma:NMA1939"/>
<dbReference type="HOGENOM" id="CLU_034547_0_2_4"/>
<dbReference type="UniPathway" id="UPA00053">
    <property type="reaction ID" value="UER00090"/>
</dbReference>
<dbReference type="Proteomes" id="UP000000626">
    <property type="component" value="Chromosome"/>
</dbReference>
<dbReference type="GO" id="GO:0005829">
    <property type="term" value="C:cytosol"/>
    <property type="evidence" value="ECO:0007669"/>
    <property type="project" value="TreeGrafter"/>
</dbReference>
<dbReference type="GO" id="GO:0004107">
    <property type="term" value="F:chorismate synthase activity"/>
    <property type="evidence" value="ECO:0007669"/>
    <property type="project" value="UniProtKB-UniRule"/>
</dbReference>
<dbReference type="GO" id="GO:0010181">
    <property type="term" value="F:FMN binding"/>
    <property type="evidence" value="ECO:0007669"/>
    <property type="project" value="TreeGrafter"/>
</dbReference>
<dbReference type="GO" id="GO:0008652">
    <property type="term" value="P:amino acid biosynthetic process"/>
    <property type="evidence" value="ECO:0007669"/>
    <property type="project" value="UniProtKB-KW"/>
</dbReference>
<dbReference type="GO" id="GO:0009073">
    <property type="term" value="P:aromatic amino acid family biosynthetic process"/>
    <property type="evidence" value="ECO:0007669"/>
    <property type="project" value="UniProtKB-KW"/>
</dbReference>
<dbReference type="GO" id="GO:0009423">
    <property type="term" value="P:chorismate biosynthetic process"/>
    <property type="evidence" value="ECO:0007669"/>
    <property type="project" value="UniProtKB-UniRule"/>
</dbReference>
<dbReference type="CDD" id="cd07304">
    <property type="entry name" value="Chorismate_synthase"/>
    <property type="match status" value="1"/>
</dbReference>
<dbReference type="FunFam" id="3.60.150.10:FF:000001">
    <property type="entry name" value="Chorismate synthase"/>
    <property type="match status" value="1"/>
</dbReference>
<dbReference type="Gene3D" id="3.60.150.10">
    <property type="entry name" value="Chorismate synthase AroC"/>
    <property type="match status" value="1"/>
</dbReference>
<dbReference type="HAMAP" id="MF_00300">
    <property type="entry name" value="Chorismate_synth"/>
    <property type="match status" value="1"/>
</dbReference>
<dbReference type="InterPro" id="IPR000453">
    <property type="entry name" value="Chorismate_synth"/>
</dbReference>
<dbReference type="InterPro" id="IPR035904">
    <property type="entry name" value="Chorismate_synth_AroC_sf"/>
</dbReference>
<dbReference type="InterPro" id="IPR020541">
    <property type="entry name" value="Chorismate_synthase_CS"/>
</dbReference>
<dbReference type="NCBIfam" id="TIGR00033">
    <property type="entry name" value="aroC"/>
    <property type="match status" value="1"/>
</dbReference>
<dbReference type="NCBIfam" id="NF003793">
    <property type="entry name" value="PRK05382.1"/>
    <property type="match status" value="1"/>
</dbReference>
<dbReference type="PANTHER" id="PTHR21085">
    <property type="entry name" value="CHORISMATE SYNTHASE"/>
    <property type="match status" value="1"/>
</dbReference>
<dbReference type="PANTHER" id="PTHR21085:SF0">
    <property type="entry name" value="CHORISMATE SYNTHASE"/>
    <property type="match status" value="1"/>
</dbReference>
<dbReference type="Pfam" id="PF01264">
    <property type="entry name" value="Chorismate_synt"/>
    <property type="match status" value="1"/>
</dbReference>
<dbReference type="PIRSF" id="PIRSF001456">
    <property type="entry name" value="Chorismate_synth"/>
    <property type="match status" value="1"/>
</dbReference>
<dbReference type="SUPFAM" id="SSF103263">
    <property type="entry name" value="Chorismate synthase, AroC"/>
    <property type="match status" value="1"/>
</dbReference>
<dbReference type="PROSITE" id="PS00787">
    <property type="entry name" value="CHORISMATE_SYNTHASE_1"/>
    <property type="match status" value="1"/>
</dbReference>
<dbReference type="PROSITE" id="PS00788">
    <property type="entry name" value="CHORISMATE_SYNTHASE_2"/>
    <property type="match status" value="1"/>
</dbReference>
<dbReference type="PROSITE" id="PS00789">
    <property type="entry name" value="CHORISMATE_SYNTHASE_3"/>
    <property type="match status" value="1"/>
</dbReference>
<gene>
    <name evidence="1" type="primary">aroC</name>
    <name type="ordered locus">NMA1939</name>
</gene>
<name>AROC_NEIMA</name>
<keyword id="KW-0028">Amino-acid biosynthesis</keyword>
<keyword id="KW-0057">Aromatic amino acid biosynthesis</keyword>
<keyword id="KW-0274">FAD</keyword>
<keyword id="KW-0285">Flavoprotein</keyword>
<keyword id="KW-0288">FMN</keyword>
<keyword id="KW-0456">Lyase</keyword>
<keyword id="KW-0521">NADP</keyword>
<proteinExistence type="inferred from homology"/>
<sequence length="366" mass="39413">MAGNTFGQLFTVTTFGESHGAGLGCIIDGCPPGLELSEADIQFDLDRRKPGTSRHVTQRREADQVEILSGVFEGKTTGTPIALLIRNTDQRSKDYGNIATSFRPGHADYTYWHKYGTRDYRGGGRSSARETAARVAAGAVAKKWLKEKFGTEITAYVTQVGEKEIRFEGCEHISQNPFFAANHSQIAELENYMDSVRKSLDSVGAKLHIEAANVPVGLGEPVFDRLDAEIAYAMMGINAVKGVEIGAGFDSVTQRGSEHGDELTPQGFLSNHSGGILGGISTGQDIHVNIAIKPTSSIATPRRSIDINGNPIELATHGRHDPCVGLRAAPIAEAMLALVLIDHALRHRAQNADVQVNTPDITLSNK</sequence>